<name>CYNS_METFK</name>
<sequence length="147" mass="16605">MSRLDVTEKIITAKVMKGLKWADVAAKLNLSKEWVTAACLGQMTLNAEQAKIIAEIFDLSDEDQKWLMVTPCKGSLPTAVPTDPLIYRFYEMINVYGTTIKQLIHEEFGDGIMSAIDFKMDLQRVADPMGDRVNIVLNGKFLPYKQF</sequence>
<keyword id="KW-0456">Lyase</keyword>
<keyword id="KW-1185">Reference proteome</keyword>
<reference key="1">
    <citation type="submission" date="2006-03" db="EMBL/GenBank/DDBJ databases">
        <title>Complete sequence of Methylobacillus flagellatus KT.</title>
        <authorList>
            <consortium name="US DOE Joint Genome Institute"/>
            <person name="Copeland A."/>
            <person name="Lucas S."/>
            <person name="Lapidus A."/>
            <person name="Barry K."/>
            <person name="Detter J.C."/>
            <person name="Glavina del Rio T."/>
            <person name="Hammon N."/>
            <person name="Israni S."/>
            <person name="Dalin E."/>
            <person name="Tice H."/>
            <person name="Pitluck S."/>
            <person name="Brettin T."/>
            <person name="Bruce D."/>
            <person name="Han C."/>
            <person name="Tapia R."/>
            <person name="Saunders E."/>
            <person name="Gilna P."/>
            <person name="Schmutz J."/>
            <person name="Larimer F."/>
            <person name="Land M."/>
            <person name="Kyrpides N."/>
            <person name="Anderson I."/>
            <person name="Richardson P."/>
        </authorList>
    </citation>
    <scope>NUCLEOTIDE SEQUENCE [LARGE SCALE GENOMIC DNA]</scope>
    <source>
        <strain>ATCC 51484 / DSM 6875 / VKM B-1610 / KT</strain>
    </source>
</reference>
<accession>Q1GZA1</accession>
<organism>
    <name type="scientific">Methylobacillus flagellatus (strain ATCC 51484 / DSM 6875 / VKM B-1610 / KT)</name>
    <dbReference type="NCBI Taxonomy" id="265072"/>
    <lineage>
        <taxon>Bacteria</taxon>
        <taxon>Pseudomonadati</taxon>
        <taxon>Pseudomonadota</taxon>
        <taxon>Betaproteobacteria</taxon>
        <taxon>Nitrosomonadales</taxon>
        <taxon>Methylophilaceae</taxon>
        <taxon>Methylobacillus</taxon>
    </lineage>
</organism>
<dbReference type="EC" id="4.2.1.104" evidence="1"/>
<dbReference type="EMBL" id="CP000284">
    <property type="protein sequence ID" value="ABE50436.1"/>
    <property type="molecule type" value="Genomic_DNA"/>
</dbReference>
<dbReference type="RefSeq" id="WP_011480390.1">
    <property type="nucleotide sequence ID" value="NC_007947.1"/>
</dbReference>
<dbReference type="SMR" id="Q1GZA1"/>
<dbReference type="STRING" id="265072.Mfla_2169"/>
<dbReference type="KEGG" id="mfa:Mfla_2169"/>
<dbReference type="eggNOG" id="COG1513">
    <property type="taxonomic scope" value="Bacteria"/>
</dbReference>
<dbReference type="HOGENOM" id="CLU_103452_1_1_4"/>
<dbReference type="OrthoDB" id="9785870at2"/>
<dbReference type="Proteomes" id="UP000002440">
    <property type="component" value="Chromosome"/>
</dbReference>
<dbReference type="GO" id="GO:0008824">
    <property type="term" value="F:cyanate hydratase activity"/>
    <property type="evidence" value="ECO:0007669"/>
    <property type="project" value="UniProtKB-UniRule"/>
</dbReference>
<dbReference type="GO" id="GO:0003677">
    <property type="term" value="F:DNA binding"/>
    <property type="evidence" value="ECO:0007669"/>
    <property type="project" value="InterPro"/>
</dbReference>
<dbReference type="GO" id="GO:0009439">
    <property type="term" value="P:cyanate metabolic process"/>
    <property type="evidence" value="ECO:0007669"/>
    <property type="project" value="UniProtKB-UniRule"/>
</dbReference>
<dbReference type="CDD" id="cd00559">
    <property type="entry name" value="Cyanase_C"/>
    <property type="match status" value="1"/>
</dbReference>
<dbReference type="Gene3D" id="3.30.1160.10">
    <property type="entry name" value="Cyanate lyase, C-terminal domain"/>
    <property type="match status" value="1"/>
</dbReference>
<dbReference type="Gene3D" id="1.10.260.40">
    <property type="entry name" value="lambda repressor-like DNA-binding domains"/>
    <property type="match status" value="1"/>
</dbReference>
<dbReference type="HAMAP" id="MF_00535">
    <property type="entry name" value="Cyanate_hydrat"/>
    <property type="match status" value="1"/>
</dbReference>
<dbReference type="InterPro" id="IPR008076">
    <property type="entry name" value="Cyanase"/>
</dbReference>
<dbReference type="InterPro" id="IPR003712">
    <property type="entry name" value="Cyanate_lyase_C"/>
</dbReference>
<dbReference type="InterPro" id="IPR036581">
    <property type="entry name" value="Cyanate_lyase_C_sf"/>
</dbReference>
<dbReference type="InterPro" id="IPR048564">
    <property type="entry name" value="CYNS_N"/>
</dbReference>
<dbReference type="InterPro" id="IPR010982">
    <property type="entry name" value="Lambda_DNA-bd_dom_sf"/>
</dbReference>
<dbReference type="NCBIfam" id="TIGR00673">
    <property type="entry name" value="cynS"/>
    <property type="match status" value="1"/>
</dbReference>
<dbReference type="NCBIfam" id="NF002773">
    <property type="entry name" value="PRK02866.1"/>
    <property type="match status" value="1"/>
</dbReference>
<dbReference type="PANTHER" id="PTHR34186">
    <property type="entry name" value="CYANATE HYDRATASE"/>
    <property type="match status" value="1"/>
</dbReference>
<dbReference type="PANTHER" id="PTHR34186:SF2">
    <property type="entry name" value="CYANATE HYDRATASE"/>
    <property type="match status" value="1"/>
</dbReference>
<dbReference type="Pfam" id="PF02560">
    <property type="entry name" value="Cyanate_lyase"/>
    <property type="match status" value="1"/>
</dbReference>
<dbReference type="Pfam" id="PF21291">
    <property type="entry name" value="CYNS_N"/>
    <property type="match status" value="1"/>
</dbReference>
<dbReference type="PIRSF" id="PIRSF001263">
    <property type="entry name" value="Cyanate_hydratas"/>
    <property type="match status" value="1"/>
</dbReference>
<dbReference type="PRINTS" id="PR01693">
    <property type="entry name" value="CYANASE"/>
</dbReference>
<dbReference type="SMART" id="SM01116">
    <property type="entry name" value="Cyanate_lyase"/>
    <property type="match status" value="1"/>
</dbReference>
<dbReference type="SUPFAM" id="SSF55234">
    <property type="entry name" value="Cyanase C-terminal domain"/>
    <property type="match status" value="1"/>
</dbReference>
<dbReference type="SUPFAM" id="SSF47413">
    <property type="entry name" value="lambda repressor-like DNA-binding domains"/>
    <property type="match status" value="1"/>
</dbReference>
<evidence type="ECO:0000255" key="1">
    <source>
        <dbReference type="HAMAP-Rule" id="MF_00535"/>
    </source>
</evidence>
<proteinExistence type="inferred from homology"/>
<gene>
    <name evidence="1" type="primary">cynS</name>
    <name type="ordered locus">Mfla_2169</name>
</gene>
<feature type="chain" id="PRO_1000072534" description="Cyanate hydratase">
    <location>
        <begin position="1"/>
        <end position="147"/>
    </location>
</feature>
<feature type="active site" evidence="1">
    <location>
        <position position="88"/>
    </location>
</feature>
<feature type="active site" evidence="1">
    <location>
        <position position="91"/>
    </location>
</feature>
<feature type="active site" evidence="1">
    <location>
        <position position="114"/>
    </location>
</feature>
<protein>
    <recommendedName>
        <fullName evidence="1">Cyanate hydratase</fullName>
        <shortName evidence="1">Cyanase</shortName>
        <ecNumber evidence="1">4.2.1.104</ecNumber>
    </recommendedName>
    <alternativeName>
        <fullName evidence="1">Cyanate hydrolase</fullName>
    </alternativeName>
    <alternativeName>
        <fullName evidence="1">Cyanate lyase</fullName>
    </alternativeName>
</protein>
<comment type="function">
    <text evidence="1">Catalyzes the reaction of cyanate with bicarbonate to produce ammonia and carbon dioxide.</text>
</comment>
<comment type="catalytic activity">
    <reaction evidence="1">
        <text>cyanate + hydrogencarbonate + 3 H(+) = NH4(+) + 2 CO2</text>
        <dbReference type="Rhea" id="RHEA:11120"/>
        <dbReference type="ChEBI" id="CHEBI:15378"/>
        <dbReference type="ChEBI" id="CHEBI:16526"/>
        <dbReference type="ChEBI" id="CHEBI:17544"/>
        <dbReference type="ChEBI" id="CHEBI:28938"/>
        <dbReference type="ChEBI" id="CHEBI:29195"/>
        <dbReference type="EC" id="4.2.1.104"/>
    </reaction>
</comment>
<comment type="similarity">
    <text evidence="1">Belongs to the cyanase family.</text>
</comment>